<gene>
    <name type="primary">spvC</name>
    <name type="synonym">mkaD</name>
    <name type="synonym">vsdD</name>
    <name type="ordered locus">PSLT038</name>
</gene>
<sequence length="241" mass="27646">MPINRPNLNLNIPPLNIVAAYDGAEIPSTNKHLKNNFNSLHNQMRKMPVSHFKEALDVPDYSGMRQSGFFAMSQGFQLNNHGYDVFIHARRESPQSQGKFAGDKFHISVLRDMVPQAFQALSGLLFSEDSPVDKWKVTDMEKVVQQARVSLGAQFTLYIKPDQENSQYSASFLHKTRQFIECLESRLSENGVISGQCPESDVHPENWKYLSYRNELRSGRDGGEMQRQALREEPFYRLMTE</sequence>
<reference key="1">
    <citation type="journal article" date="1990" name="Gene">
        <title>Nucleotide sequence of mkaD, a virulence-associated gene of Salmonella typhimurium containing variable and constant regions.</title>
        <authorList>
            <person name="Taira S."/>
            <person name="Rhen M."/>
        </authorList>
    </citation>
    <scope>NUCLEOTIDE SEQUENCE [GENOMIC DNA]</scope>
    <source>
        <plasmid>pEX102</plasmid>
    </source>
</reference>
<reference key="2">
    <citation type="journal article" date="2001" name="Nature">
        <title>Complete genome sequence of Salmonella enterica serovar Typhimurium LT2.</title>
        <authorList>
            <person name="McClelland M."/>
            <person name="Sanderson K.E."/>
            <person name="Spieth J."/>
            <person name="Clifton S.W."/>
            <person name="Latreille P."/>
            <person name="Courtney L."/>
            <person name="Porwollik S."/>
            <person name="Ali J."/>
            <person name="Dante M."/>
            <person name="Du F."/>
            <person name="Hou S."/>
            <person name="Layman D."/>
            <person name="Leonard S."/>
            <person name="Nguyen C."/>
            <person name="Scott K."/>
            <person name="Holmes A."/>
            <person name="Grewal N."/>
            <person name="Mulvaney E."/>
            <person name="Ryan E."/>
            <person name="Sun H."/>
            <person name="Florea L."/>
            <person name="Miller W."/>
            <person name="Stoneking T."/>
            <person name="Nhan M."/>
            <person name="Waterston R."/>
            <person name="Wilson R.K."/>
        </authorList>
    </citation>
    <scope>NUCLEOTIDE SEQUENCE [LARGE SCALE GENOMIC DNA]</scope>
    <source>
        <strain>LT2 / SGSC1412 / ATCC 700720</strain>
        <plasmid>pSLT</plasmid>
    </source>
</reference>
<reference key="3">
    <citation type="journal article" date="1991" name="FEMS Microbiol. Lett.">
        <title>Amino-terminal sequence analysis of four plasmid-encoded virulence-associated proteins of Salmonella typhimurium.</title>
        <authorList>
            <person name="Taira S."/>
            <person name="Baumann M."/>
            <person name="Riikonen P."/>
            <person name="Sukupolvi S."/>
            <person name="Rhen M."/>
        </authorList>
    </citation>
    <scope>PROTEIN SEQUENCE OF 2-10</scope>
    <source>
        <plasmid>pEX102</plasmid>
    </source>
</reference>
<reference key="4">
    <citation type="journal article" date="2007" name="Science">
        <title>The phosphothreonine lyase activity of a bacterial type III effector family.</title>
        <authorList>
            <person name="Li H."/>
            <person name="Xu H."/>
            <person name="Zhou Y."/>
            <person name="Zhang J."/>
            <person name="Long C."/>
            <person name="Li S."/>
            <person name="Chen S."/>
            <person name="Zhou J.-M."/>
            <person name="Shao F."/>
        </authorList>
    </citation>
    <scope>FUNCTION</scope>
    <scope>SUBSTRATES</scope>
    <source>
        <strain>LT2 / SGSC1412 / ATCC 700720</strain>
        <plasmid>pSLT</plasmid>
    </source>
</reference>
<reference key="5">
    <citation type="journal article" date="2008" name="Mol. Microbiol.">
        <title>SpvC is a Salmonella effector with phosphothreonine lyase activity on host mitogen-activated protein kinases.</title>
        <authorList>
            <person name="Mazurkiewicz P."/>
            <person name="Thomas J."/>
            <person name="Thompson J.A."/>
            <person name="Liu M."/>
            <person name="Arbibe L."/>
            <person name="Sansonetti P."/>
            <person name="Holden D.W."/>
        </authorList>
    </citation>
    <scope>FUNCTION</scope>
    <scope>CATALYTIC ACTIVITY</scope>
    <scope>ROLE IN VIRULENCE</scope>
    <scope>SUBCELLULAR LOCATION</scope>
    <scope>SECRETION VIA TYPE III SECRETION SYSTEM</scope>
    <scope>DISRUPTION PHENOTYPE</scope>
    <source>
        <strain>ATCC 14028 / SGSC 2980 / CDC 6516-60 / NCTC 12023</strain>
    </source>
</reference>
<reference key="6">
    <citation type="journal article" date="2007" name="Mol. Cell">
        <title>Structural insights into the enzymatic mechanism of the pathogenic MAPK phosphothreonine lyase.</title>
        <authorList>
            <person name="Zhu Y."/>
            <person name="Li H."/>
            <person name="Long C."/>
            <person name="Hu L."/>
            <person name="Xu H."/>
            <person name="Liu L."/>
            <person name="Chen S."/>
            <person name="Wang D.C."/>
            <person name="Shao F."/>
        </authorList>
    </citation>
    <scope>X-RAY CRYSTALLOGRAPHY (2.0 ANGSTROMS) OF APOENZYME AND MUTANT ALA-136 IN COMPLEX WITH A PHOSPHOPEPTIDE SUBSTRATE</scope>
    <scope>FUNCTION</scope>
    <scope>CATALYTIC ACTIVITY</scope>
    <scope>BIOPHYSICOCHEMICAL PROPERTIES</scope>
    <scope>REACTION MECHANISM</scope>
    <scope>ACTIVE SITES</scope>
    <scope>MUTAGENESIS OF PHE-100; LYS-104; HIS-106; LYS-134; LYS-136; ARG-148; TYR-158; LYS-160; ASP-201; ARG-213 AND ARG-220</scope>
    <source>
        <strain>LT2 / SGSC1412 / ATCC 700720</strain>
        <plasmid>pSLT</plasmid>
    </source>
</reference>
<reference key="7">
    <citation type="journal article" date="2008" name="Nat. Struct. Mol. Biol.">
        <title>Structural basis for the catalytic mechanism of phosphothreonine lyase.</title>
        <authorList>
            <person name="Chen L."/>
            <person name="Wang H."/>
            <person name="Zhang J."/>
            <person name="Gu L."/>
            <person name="Huang N."/>
            <person name="Zhou J.M."/>
            <person name="Chai J."/>
        </authorList>
    </citation>
    <scope>X-RAY CRYSTALLOGRAPHY (1.8 ANGSTROMS) OF APOENZYME AND MUTANT ALA-136 IN COMPLEX WITH A PHOSPHOPEPTIDE SUBSTRATE</scope>
    <scope>FUNCTION</scope>
    <scope>ACTIVE SITES</scope>
    <scope>MUTAGENESIS OF PHE-86; ARG-90; PHE-100; LYS-104; HIS-106; LYS-134; LYS-136; ARG-148; VAL-149; TYR-158; LYS-160; ARG-213; GLU-215 AND ARG-220</scope>
</reference>
<evidence type="ECO:0000269" key="1">
    <source>
    </source>
</evidence>
<evidence type="ECO:0000269" key="2">
    <source>
    </source>
</evidence>
<evidence type="ECO:0000269" key="3">
    <source>
    </source>
</evidence>
<evidence type="ECO:0000269" key="4">
    <source>
    </source>
</evidence>
<evidence type="ECO:0000269" key="5">
    <source>
    </source>
</evidence>
<evidence type="ECO:0000305" key="6"/>
<evidence type="ECO:0007829" key="7">
    <source>
        <dbReference type="PDB" id="2Z8N"/>
    </source>
</evidence>
<evidence type="ECO:0007829" key="8">
    <source>
        <dbReference type="PDB" id="4HAH"/>
    </source>
</evidence>
<protein>
    <recommendedName>
        <fullName>MAPK phosphothreonine lyase</fullName>
        <ecNumber>4.2.3.-</ecNumber>
    </recommendedName>
    <alternativeName>
        <fullName>27.5 kDa virulence protein</fullName>
    </alternativeName>
    <alternativeName>
        <fullName>Secreted effector protein SpvC</fullName>
    </alternativeName>
</protein>
<name>SPVC_SALTY</name>
<organism>
    <name type="scientific">Salmonella typhimurium (strain LT2 / SGSC1412 / ATCC 700720)</name>
    <dbReference type="NCBI Taxonomy" id="99287"/>
    <lineage>
        <taxon>Bacteria</taxon>
        <taxon>Pseudomonadati</taxon>
        <taxon>Pseudomonadota</taxon>
        <taxon>Gammaproteobacteria</taxon>
        <taxon>Enterobacterales</taxon>
        <taxon>Enterobacteriaceae</taxon>
        <taxon>Salmonella</taxon>
    </lineage>
</organism>
<keyword id="KW-0002">3D-structure</keyword>
<keyword id="KW-0903">Direct protein sequencing</keyword>
<keyword id="KW-0456">Lyase</keyword>
<keyword id="KW-0614">Plasmid</keyword>
<keyword id="KW-1185">Reference proteome</keyword>
<keyword id="KW-0964">Secreted</keyword>
<keyword id="KW-0843">Virulence</keyword>
<dbReference type="EC" id="4.2.3.-"/>
<dbReference type="EMBL" id="M34355">
    <property type="protein sequence ID" value="AAA27162.1"/>
    <property type="molecule type" value="Genomic_DNA"/>
</dbReference>
<dbReference type="EMBL" id="AE006471">
    <property type="protein sequence ID" value="AAL23529.1"/>
    <property type="molecule type" value="Genomic_DNA"/>
</dbReference>
<dbReference type="PIR" id="JQ0747">
    <property type="entry name" value="JQ0747"/>
</dbReference>
<dbReference type="RefSeq" id="NP_490528.1">
    <property type="nucleotide sequence ID" value="NC_003277.2"/>
</dbReference>
<dbReference type="RefSeq" id="WP_001122242.1">
    <property type="nucleotide sequence ID" value="NC_003277.2"/>
</dbReference>
<dbReference type="PDB" id="2P1W">
    <property type="method" value="X-ray"/>
    <property type="resolution" value="2.30 A"/>
    <property type="chains" value="A=1-241"/>
</dbReference>
<dbReference type="PDB" id="2Q8Y">
    <property type="method" value="X-ray"/>
    <property type="resolution" value="2.00 A"/>
    <property type="chains" value="A=1-241"/>
</dbReference>
<dbReference type="PDB" id="2Z8M">
    <property type="method" value="X-ray"/>
    <property type="resolution" value="2.00 A"/>
    <property type="chains" value="A/B=1-241"/>
</dbReference>
<dbReference type="PDB" id="2Z8N">
    <property type="method" value="X-ray"/>
    <property type="resolution" value="1.80 A"/>
    <property type="chains" value="A/B=1-241"/>
</dbReference>
<dbReference type="PDB" id="2Z8O">
    <property type="method" value="X-ray"/>
    <property type="resolution" value="2.40 A"/>
    <property type="chains" value="A/B=1-241"/>
</dbReference>
<dbReference type="PDB" id="2Z8P">
    <property type="method" value="X-ray"/>
    <property type="resolution" value="1.80 A"/>
    <property type="chains" value="A=1-241"/>
</dbReference>
<dbReference type="PDB" id="4H43">
    <property type="method" value="X-ray"/>
    <property type="resolution" value="2.30 A"/>
    <property type="chains" value="A/B=1-241"/>
</dbReference>
<dbReference type="PDB" id="4HAH">
    <property type="method" value="X-ray"/>
    <property type="resolution" value="1.80 A"/>
    <property type="chains" value="A/B=1-241"/>
</dbReference>
<dbReference type="PDBsum" id="2P1W"/>
<dbReference type="PDBsum" id="2Q8Y"/>
<dbReference type="PDBsum" id="2Z8M"/>
<dbReference type="PDBsum" id="2Z8N"/>
<dbReference type="PDBsum" id="2Z8O"/>
<dbReference type="PDBsum" id="2Z8P"/>
<dbReference type="PDBsum" id="4H43"/>
<dbReference type="PDBsum" id="4HAH"/>
<dbReference type="SMR" id="P0A2M9"/>
<dbReference type="DIP" id="DIP-46403N"/>
<dbReference type="IntAct" id="P0A2M9">
    <property type="interactions" value="2"/>
</dbReference>
<dbReference type="MINT" id="P0A2M9"/>
<dbReference type="GeneID" id="1256201"/>
<dbReference type="KEGG" id="stm:PSLT038"/>
<dbReference type="PATRIC" id="fig|99287.12.peg.4889"/>
<dbReference type="HOGENOM" id="CLU_100525_0_0_6"/>
<dbReference type="OMA" id="MARVDQQ"/>
<dbReference type="PhylomeDB" id="P0A2M9"/>
<dbReference type="BioCyc" id="SENT99287:PSLT038-MONOMER"/>
<dbReference type="SABIO-RK" id="P0A2M9"/>
<dbReference type="EvolutionaryTrace" id="P0A2M9"/>
<dbReference type="PHI-base" id="PHI:11136"/>
<dbReference type="PHI-base" id="PHI:11604"/>
<dbReference type="PHI-base" id="PHI:9966"/>
<dbReference type="PRO" id="PR:P0A2M9"/>
<dbReference type="Proteomes" id="UP000001014">
    <property type="component" value="Plasmid pSLT"/>
</dbReference>
<dbReference type="GO" id="GO:0005576">
    <property type="term" value="C:extracellular region"/>
    <property type="evidence" value="ECO:0007669"/>
    <property type="project" value="UniProtKB-SubCell"/>
</dbReference>
<dbReference type="GO" id="GO:0016829">
    <property type="term" value="F:lyase activity"/>
    <property type="evidence" value="ECO:0007669"/>
    <property type="project" value="UniProtKB-KW"/>
</dbReference>
<dbReference type="Gene3D" id="3.30.2430.10">
    <property type="entry name" value="phosphothreonine lyase"/>
    <property type="match status" value="1"/>
</dbReference>
<dbReference type="InterPro" id="IPR003519">
    <property type="entry name" value="OspF/SpvC"/>
</dbReference>
<dbReference type="InterPro" id="IPR038498">
    <property type="entry name" value="OspF/SpvC_sf"/>
</dbReference>
<dbReference type="NCBIfam" id="NF011781">
    <property type="entry name" value="PRK15245.1"/>
    <property type="match status" value="1"/>
</dbReference>
<dbReference type="Pfam" id="PF03536">
    <property type="entry name" value="VRP3"/>
    <property type="match status" value="1"/>
</dbReference>
<dbReference type="PRINTS" id="PR01342">
    <property type="entry name" value="SALVRPPROT"/>
</dbReference>
<feature type="initiator methionine" description="Removed" evidence="5">
    <location>
        <position position="1"/>
    </location>
</feature>
<feature type="chain" id="PRO_0000221668" description="MAPK phosphothreonine lyase">
    <location>
        <begin position="2"/>
        <end position="241"/>
    </location>
</feature>
<feature type="active site" description="Proton donor">
    <location>
        <position position="106"/>
    </location>
</feature>
<feature type="active site" description="Proton acceptor">
    <location>
        <position position="136"/>
    </location>
</feature>
<feature type="mutagenesis site" description="Marked decrease in enzymatic activity." evidence="3">
    <original>F</original>
    <variation>D</variation>
    <location>
        <position position="86"/>
    </location>
</feature>
<feature type="mutagenesis site" description="Slight decrease in enzymatic activity." evidence="3">
    <original>R</original>
    <variation>E</variation>
    <location>
        <position position="90"/>
    </location>
</feature>
<feature type="mutagenesis site" description="Marked decrease in enzymatic activity." evidence="2 3">
    <original>F</original>
    <variation>E</variation>
    <location>
        <position position="100"/>
    </location>
</feature>
<feature type="mutagenesis site" description="Loss of enzymatic activity." evidence="2 3">
    <original>F</original>
    <variation>L</variation>
    <location>
        <position position="100"/>
    </location>
</feature>
<feature type="mutagenesis site" description="Loss of enzymatic activity." evidence="2 3">
    <original>K</original>
    <variation>A</variation>
    <variation>R</variation>
    <location>
        <position position="104"/>
    </location>
</feature>
<feature type="mutagenesis site" description="Marked decrease in enzymatic activity." evidence="2 3">
    <original>H</original>
    <variation>A</variation>
    <location>
        <position position="106"/>
    </location>
</feature>
<feature type="mutagenesis site" description="7-fold decrease in enzymatic activity, but no effect on substrate affinity." evidence="2 3">
    <original>H</original>
    <variation>K</variation>
    <location>
        <position position="106"/>
    </location>
</feature>
<feature type="mutagenesis site" description="Loss of enzymatic activity." evidence="2 3">
    <original>H</original>
    <variation>N</variation>
    <location>
        <position position="106"/>
    </location>
</feature>
<feature type="mutagenesis site" description="2-fold decrease in enzymatic activity." evidence="2 3">
    <original>K</original>
    <variation>A</variation>
    <location>
        <position position="134"/>
    </location>
</feature>
<feature type="mutagenesis site" description="Slight decrease in enzymatic activity." evidence="2 3">
    <original>K</original>
    <variation>E</variation>
    <location>
        <position position="134"/>
    </location>
</feature>
<feature type="mutagenesis site" description="No effect on enzymatic activity." evidence="2 3">
    <original>K</original>
    <variation>R</variation>
    <location>
        <position position="134"/>
    </location>
</feature>
<feature type="mutagenesis site" description="Loss of enzymatic activity." evidence="2 3">
    <original>K</original>
    <variation>A</variation>
    <variation>R</variation>
    <location>
        <position position="136"/>
    </location>
</feature>
<feature type="mutagenesis site" description="Marked decrease in enzymatic activity." evidence="2 3">
    <original>R</original>
    <variation>A</variation>
    <location>
        <position position="148"/>
    </location>
</feature>
<feature type="mutagenesis site" description="Loss of enzymatic activity." evidence="2 3">
    <original>R</original>
    <variation>Q</variation>
    <location>
        <position position="148"/>
    </location>
</feature>
<feature type="mutagenesis site" description="Loss of enzymatic activity." evidence="3">
    <original>V</original>
    <variation>D</variation>
    <location>
        <position position="149"/>
    </location>
</feature>
<feature type="mutagenesis site" description="Marked decrease in enzymatic activity." evidence="2 3">
    <original>Y</original>
    <variation>E</variation>
    <location>
        <position position="158"/>
    </location>
</feature>
<feature type="mutagenesis site" description="20-fold decrease in enzymatic activity, but no effect on substrate affinity." evidence="2 3">
    <original>Y</original>
    <variation>F</variation>
    <location>
        <position position="158"/>
    </location>
</feature>
<feature type="mutagenesis site" description="More than 5-fold decrease in substrate affinity." evidence="2 3">
    <original>K</original>
    <variation>A</variation>
    <location>
        <position position="160"/>
    </location>
</feature>
<feature type="mutagenesis site" description="Slight decrease in enzymatic activity." evidence="2 3">
    <original>K</original>
    <variation>E</variation>
    <location>
        <position position="160"/>
    </location>
</feature>
<feature type="mutagenesis site" description="2-fold decrease in enzymatic activity, but no effect on substrate affinity." evidence="2 3">
    <original>K</original>
    <variation>R</variation>
    <location>
        <position position="160"/>
    </location>
</feature>
<feature type="mutagenesis site" description="47-fold decrease in enzymatic activity, but no effect on substrate affinity." evidence="2">
    <original>D</original>
    <variation>N</variation>
    <location>
        <position position="201"/>
    </location>
</feature>
<feature type="mutagenesis site" description="Loss of enzymatic activity." evidence="2 3">
    <original>R</original>
    <variation>A</variation>
    <variation>Q</variation>
    <location>
        <position position="213"/>
    </location>
</feature>
<feature type="mutagenesis site" description="Nearly no decrease in enzymatic activity." evidence="3">
    <original>E</original>
    <variation>A</variation>
    <location>
        <position position="215"/>
    </location>
</feature>
<feature type="mutagenesis site" description="Marked decrease in enzymatic activity." evidence="2 3">
    <original>R</original>
    <variation>A</variation>
    <location>
        <position position="220"/>
    </location>
</feature>
<feature type="mutagenesis site" description="Loss of enzymatic activity." evidence="2 3">
    <original>R</original>
    <variation>Q</variation>
    <location>
        <position position="220"/>
    </location>
</feature>
<feature type="helix" evidence="7">
    <location>
        <begin position="29"/>
        <end position="35"/>
    </location>
</feature>
<feature type="helix" evidence="7">
    <location>
        <begin position="37"/>
        <end position="44"/>
    </location>
</feature>
<feature type="helix" evidence="7">
    <location>
        <begin position="61"/>
        <end position="64"/>
    </location>
</feature>
<feature type="turn" evidence="8">
    <location>
        <begin position="66"/>
        <end position="69"/>
    </location>
</feature>
<feature type="strand" evidence="7">
    <location>
        <begin position="71"/>
        <end position="73"/>
    </location>
</feature>
<feature type="strand" evidence="7">
    <location>
        <begin position="76"/>
        <end position="79"/>
    </location>
</feature>
<feature type="strand" evidence="7">
    <location>
        <begin position="82"/>
        <end position="93"/>
    </location>
</feature>
<feature type="strand" evidence="7">
    <location>
        <begin position="102"/>
        <end position="107"/>
    </location>
</feature>
<feature type="helix" evidence="7">
    <location>
        <begin position="111"/>
        <end position="113"/>
    </location>
</feature>
<feature type="helix" evidence="7">
    <location>
        <begin position="114"/>
        <end position="125"/>
    </location>
</feature>
<feature type="strand" evidence="7">
    <location>
        <begin position="133"/>
        <end position="138"/>
    </location>
</feature>
<feature type="turn" evidence="7">
    <location>
        <begin position="140"/>
        <end position="142"/>
    </location>
</feature>
<feature type="helix" evidence="7">
    <location>
        <begin position="147"/>
        <end position="150"/>
    </location>
</feature>
<feature type="strand" evidence="7">
    <location>
        <begin position="155"/>
        <end position="158"/>
    </location>
</feature>
<feature type="helix" evidence="7">
    <location>
        <begin position="170"/>
        <end position="189"/>
    </location>
</feature>
<feature type="strand" evidence="7">
    <location>
        <begin position="208"/>
        <end position="214"/>
    </location>
</feature>
<feature type="turn" evidence="7">
    <location>
        <begin position="215"/>
        <end position="217"/>
    </location>
</feature>
<feature type="helix" evidence="7">
    <location>
        <begin position="224"/>
        <end position="230"/>
    </location>
</feature>
<feature type="helix" evidence="7">
    <location>
        <begin position="234"/>
        <end position="240"/>
    </location>
</feature>
<proteinExistence type="evidence at protein level"/>
<accession>P0A2M9</accession>
<accession>P21456</accession>
<comment type="function">
    <text evidence="1 2 3 4">Secreted effector that irreversibly inactivates host MAP kinases by catalyzing the dephosphorylation of the phosphothreonine residue in the pT-X-pY motif in MAPK2/ERK2, MAPK3/ERK1, and p38, via a beta-elimination reaction leading to a dehydrobutyrine residue. Is also able to remove the phosphate group from phospho-JNK in vitro, but JNK may not be a substrate in vivo. Could help suppress localized pro-inflammatory responses at infection foci in the spleen and liver, and thereby facilitate bacterial growth.</text>
</comment>
<comment type="biophysicochemical properties">
    <kinetics>
        <KM evidence="2">52.2 uM for the Erk2 phosphopeptide DHTGFL-pT-E-pY-VATR</KM>
        <Vmax evidence="2">22.72 umol/min/mg enzyme with the Erk2 phosphopeptide DHTGFL-pT-E-pY-VATR as substrate</Vmax>
        <text>kcat is 10.60 sec(-1) with the Erk2 phosphopeptide DHTGFL-pT-E-pY-VATR as substrate.</text>
    </kinetics>
    <phDependence>
        <text evidence="2">Optimum pH is 8.5.</text>
    </phDependence>
</comment>
<comment type="interaction">
    <interactant intactId="EBI-15676035">
        <id>P0A2M9</id>
    </interactant>
    <interactant intactId="EBI-959949">
        <id>P28482</id>
        <label>MAPK1</label>
    </interactant>
    <organismsDiffer>true</organismsDiffer>
    <experiments>3</experiments>
</comment>
<comment type="subcellular location">
    <subcellularLocation>
        <location evidence="4">Secreted</location>
    </subcellularLocation>
    <text>Can be secreted in vitro by either the SPI-1 or SPI-2 type III secretion systems (T3SS). Translocation of the protein into the cytosol of infected macrophages by intracellular bacteria is dependent on the SPI-2 T3SS. Translocated SpvC proteins appear to be distributed evenly in the cytoplasm of infected cells, and neither colocalize with the SCV membrane nor accumulate in the nucleus of infected cells.</text>
</comment>
<comment type="disruption phenotype">
    <text evidence="4">Strains lacking this gene are attenuated for systemic virulence in mice.</text>
</comment>
<comment type="similarity">
    <text evidence="6">Belongs to the phosphothreonine lyase family.</text>
</comment>
<geneLocation type="plasmid">
    <name>pSLT</name>
</geneLocation>
<geneLocation type="plasmid">
    <name>pEX102</name>
</geneLocation>